<gene>
    <name type="primary">WNT-1</name>
</gene>
<feature type="chain" id="PRO_0000200605" description="Protein Wnt-1">
    <location>
        <begin position="1" status="less than"/>
        <end position="126" status="greater than"/>
    </location>
</feature>
<feature type="lipid moiety-binding region" description="O-palmitoleoyl serine; by PORCN" evidence="5">
    <location>
        <position position="1"/>
    </location>
</feature>
<feature type="glycosylation site" description="N-linked (GlcNAc...) asparagine" evidence="6">
    <location>
        <position position="93"/>
    </location>
</feature>
<feature type="glycosylation site" description="N-linked (GlcNAc...) asparagine" evidence="6">
    <location>
        <position position="123"/>
    </location>
</feature>
<feature type="disulfide bond" evidence="3">
    <location>
        <begin position="92"/>
        <end position="107"/>
    </location>
</feature>
<feature type="non-terminal residue">
    <location>
        <position position="1"/>
    </location>
</feature>
<feature type="non-terminal residue">
    <location>
        <position position="126"/>
    </location>
</feature>
<proteinExistence type="inferred from homology"/>
<keyword id="KW-0217">Developmental protein</keyword>
<keyword id="KW-1015">Disulfide bond</keyword>
<keyword id="KW-0272">Extracellular matrix</keyword>
<keyword id="KW-0325">Glycoprotein</keyword>
<keyword id="KW-0449">Lipoprotein</keyword>
<keyword id="KW-0964">Secreted</keyword>
<keyword id="KW-0879">Wnt signaling pathway</keyword>
<reference key="1">
    <citation type="journal article" date="1992" name="Proc. Natl. Acad. Sci. U.S.A.">
        <title>Diversification of the Wnt gene family on the ancestral lineage of vertebrates.</title>
        <authorList>
            <person name="Sidow A."/>
        </authorList>
    </citation>
    <scope>NUCLEOTIDE SEQUENCE [GENOMIC DNA]</scope>
</reference>
<organism>
    <name type="scientific">Pituophis melanoleucus</name>
    <name type="common">Pine snake</name>
    <name type="synonym">Coluber melanoleucus</name>
    <dbReference type="NCBI Taxonomy" id="8595"/>
    <lineage>
        <taxon>Eukaryota</taxon>
        <taxon>Metazoa</taxon>
        <taxon>Chordata</taxon>
        <taxon>Craniata</taxon>
        <taxon>Vertebrata</taxon>
        <taxon>Euteleostomi</taxon>
        <taxon>Lepidosauria</taxon>
        <taxon>Squamata</taxon>
        <taxon>Bifurcata</taxon>
        <taxon>Unidentata</taxon>
        <taxon>Episquamata</taxon>
        <taxon>Toxicofera</taxon>
        <taxon>Serpentes</taxon>
        <taxon>Colubroidea</taxon>
        <taxon>Colubridae</taxon>
        <taxon>Colubrinae</taxon>
        <taxon>Pituophis</taxon>
    </lineage>
</organism>
<name>WNT1_PITME</name>
<evidence type="ECO:0000250" key="1">
    <source>
        <dbReference type="UniProtKB" id="P04426"/>
    </source>
</evidence>
<evidence type="ECO:0000250" key="2">
    <source>
        <dbReference type="UniProtKB" id="P04628"/>
    </source>
</evidence>
<evidence type="ECO:0000250" key="3">
    <source>
        <dbReference type="UniProtKB" id="P28026"/>
    </source>
</evidence>
<evidence type="ECO:0000250" key="4">
    <source>
        <dbReference type="UniProtKB" id="P56704"/>
    </source>
</evidence>
<evidence type="ECO:0000250" key="5">
    <source>
        <dbReference type="UniProtKB" id="Q91029"/>
    </source>
</evidence>
<evidence type="ECO:0000255" key="6"/>
<evidence type="ECO:0000305" key="7"/>
<sequence length="126" mass="14020">SGSCTVKTCWMRLPTFRTVGDFLKDRFDGASRVIYGNKGSNRASRMELHHLEPENPAHKPPSPHDLVYFEKSPNFCTYSGKTGTAGTAGRFCNSTSPALDGCELLCCGRGYRTRTQRVTERCNCTF</sequence>
<accession>P28139</accession>
<protein>
    <recommendedName>
        <fullName>Protein Wnt-1</fullName>
    </recommendedName>
</protein>
<comment type="function">
    <text evidence="1 2">Ligand for members of the frizzled family of seven transmembrane receptors. Acts in the canonical Wnt signaling pathway by promoting beta-catenin-dependent transcriptional activation (By similarity). Plays an essential role in the development of the embryonic brain and central nervous system (CNS) (By similarity). Has a role in osteoblast function, bone development and bone homeostasis (By similarity).</text>
</comment>
<comment type="subcellular location">
    <subcellularLocation>
        <location evidence="2">Secreted</location>
        <location evidence="2">Extracellular space</location>
        <location evidence="2">Extracellular matrix</location>
    </subcellularLocation>
    <subcellularLocation>
        <location evidence="2">Secreted</location>
    </subcellularLocation>
</comment>
<comment type="PTM">
    <text evidence="4 5">Palmitoleoylation is required for efficient binding to frizzled receptors. Palmitoleoylation is necessary for proper trafficking to cell surface (By similarity). Depalmitoleoylated by NOTUM, leading to inhibit Wnt signaling pathway (By similarity).</text>
</comment>
<comment type="similarity">
    <text evidence="7">Belongs to the Wnt family.</text>
</comment>
<dbReference type="EMBL" id="M91296">
    <property type="protein sequence ID" value="AAA49454.1"/>
    <property type="molecule type" value="Genomic_DNA"/>
</dbReference>
<dbReference type="SMR" id="P28139"/>
<dbReference type="GlyCosmos" id="P28139">
    <property type="glycosylation" value="2 sites, No reported glycans"/>
</dbReference>
<dbReference type="GO" id="GO:0005615">
    <property type="term" value="C:extracellular space"/>
    <property type="evidence" value="ECO:0007669"/>
    <property type="project" value="TreeGrafter"/>
</dbReference>
<dbReference type="GO" id="GO:0005125">
    <property type="term" value="F:cytokine activity"/>
    <property type="evidence" value="ECO:0007669"/>
    <property type="project" value="TreeGrafter"/>
</dbReference>
<dbReference type="GO" id="GO:0005109">
    <property type="term" value="F:frizzled binding"/>
    <property type="evidence" value="ECO:0007669"/>
    <property type="project" value="TreeGrafter"/>
</dbReference>
<dbReference type="GO" id="GO:0060070">
    <property type="term" value="P:canonical Wnt signaling pathway"/>
    <property type="evidence" value="ECO:0007669"/>
    <property type="project" value="TreeGrafter"/>
</dbReference>
<dbReference type="GO" id="GO:0045165">
    <property type="term" value="P:cell fate commitment"/>
    <property type="evidence" value="ECO:0007669"/>
    <property type="project" value="TreeGrafter"/>
</dbReference>
<dbReference type="GO" id="GO:0030182">
    <property type="term" value="P:neuron differentiation"/>
    <property type="evidence" value="ECO:0007669"/>
    <property type="project" value="TreeGrafter"/>
</dbReference>
<dbReference type="Gene3D" id="3.30.2460.20">
    <property type="match status" value="1"/>
</dbReference>
<dbReference type="InterPro" id="IPR005817">
    <property type="entry name" value="Wnt"/>
</dbReference>
<dbReference type="InterPro" id="IPR009139">
    <property type="entry name" value="Wnt1"/>
</dbReference>
<dbReference type="InterPro" id="IPR043158">
    <property type="entry name" value="Wnt_C"/>
</dbReference>
<dbReference type="PANTHER" id="PTHR12027:SF91">
    <property type="entry name" value="PROTO-ONCOGENE WNT-1"/>
    <property type="match status" value="1"/>
</dbReference>
<dbReference type="PANTHER" id="PTHR12027">
    <property type="entry name" value="WNT RELATED"/>
    <property type="match status" value="1"/>
</dbReference>
<dbReference type="Pfam" id="PF00110">
    <property type="entry name" value="wnt"/>
    <property type="match status" value="1"/>
</dbReference>
<dbReference type="PRINTS" id="PR01841">
    <property type="entry name" value="WNT1PROTEIN"/>
</dbReference>
<dbReference type="SMART" id="SM00097">
    <property type="entry name" value="WNT1"/>
    <property type="match status" value="1"/>
</dbReference>